<feature type="chain" id="PRO_0000319123" description="Formate-dependent phosphoribosylglycinamide formyltransferase">
    <location>
        <begin position="1"/>
        <end position="384"/>
    </location>
</feature>
<feature type="domain" description="ATP-grasp" evidence="1">
    <location>
        <begin position="111"/>
        <end position="300"/>
    </location>
</feature>
<feature type="binding site" evidence="1">
    <location>
        <begin position="14"/>
        <end position="15"/>
    </location>
    <ligand>
        <name>N(1)-(5-phospho-beta-D-ribosyl)glycinamide</name>
        <dbReference type="ChEBI" id="CHEBI:143788"/>
    </ligand>
</feature>
<feature type="binding site" evidence="1">
    <location>
        <position position="74"/>
    </location>
    <ligand>
        <name>N(1)-(5-phospho-beta-D-ribosyl)glycinamide</name>
        <dbReference type="ChEBI" id="CHEBI:143788"/>
    </ligand>
</feature>
<feature type="binding site" evidence="1">
    <location>
        <position position="106"/>
    </location>
    <ligand>
        <name>ATP</name>
        <dbReference type="ChEBI" id="CHEBI:30616"/>
    </ligand>
</feature>
<feature type="binding site" evidence="1">
    <location>
        <position position="147"/>
    </location>
    <ligand>
        <name>ATP</name>
        <dbReference type="ChEBI" id="CHEBI:30616"/>
    </ligand>
</feature>
<feature type="binding site" evidence="1">
    <location>
        <begin position="152"/>
        <end position="157"/>
    </location>
    <ligand>
        <name>ATP</name>
        <dbReference type="ChEBI" id="CHEBI:30616"/>
    </ligand>
</feature>
<feature type="binding site" evidence="1">
    <location>
        <begin position="187"/>
        <end position="190"/>
    </location>
    <ligand>
        <name>ATP</name>
        <dbReference type="ChEBI" id="CHEBI:30616"/>
    </ligand>
</feature>
<feature type="binding site" evidence="1">
    <location>
        <position position="195"/>
    </location>
    <ligand>
        <name>ATP</name>
        <dbReference type="ChEBI" id="CHEBI:30616"/>
    </ligand>
</feature>
<feature type="binding site" evidence="1">
    <location>
        <position position="259"/>
    </location>
    <ligand>
        <name>Mg(2+)</name>
        <dbReference type="ChEBI" id="CHEBI:18420"/>
    </ligand>
</feature>
<feature type="binding site" evidence="1">
    <location>
        <position position="271"/>
    </location>
    <ligand>
        <name>Mg(2+)</name>
        <dbReference type="ChEBI" id="CHEBI:18420"/>
    </ligand>
</feature>
<feature type="binding site" evidence="1">
    <location>
        <position position="278"/>
    </location>
    <ligand>
        <name>N(1)-(5-phospho-beta-D-ribosyl)glycinamide</name>
        <dbReference type="ChEBI" id="CHEBI:143788"/>
    </ligand>
</feature>
<feature type="binding site" evidence="1">
    <location>
        <position position="348"/>
    </location>
    <ligand>
        <name>N(1)-(5-phospho-beta-D-ribosyl)glycinamide</name>
        <dbReference type="ChEBI" id="CHEBI:143788"/>
    </ligand>
</feature>
<feature type="binding site" evidence="1">
    <location>
        <begin position="355"/>
        <end position="356"/>
    </location>
    <ligand>
        <name>N(1)-(5-phospho-beta-D-ribosyl)glycinamide</name>
        <dbReference type="ChEBI" id="CHEBI:143788"/>
    </ligand>
</feature>
<proteinExistence type="inferred from homology"/>
<sequence>MYQAKKMLLLGSGELGKEVVIEAQRLGVVTVAVDSYEHAPAMQAAHKSYVIDMLDKAQVREVIEKEKPDLIVPEVEAIATDELLKLEEEGFHVIPNARAAKLTMDREGIRRLAAETLHLPTAGYEFANTYEEFKEAAETIGFPCVVKPLMSSSGKGQSVCRSASGLKSCWDMAMEGGRVKNGRVIVEEFIPFESEITLLTVRAANGTSFCAPIGHEQKDGDYIESWQPHHMTEQQIKEAKHIAKSITDELGGYGLFGVELFLTEDKVYFSEVSPRPHDTGLVTLVTQNLSEFALHVRAVLGFPIPEITQLSPGASRPLKAPKELADYAVEGLEKALAVKSTQVRVFGKPVTKVGRRMAVALSAAETVEEARERAAEALSHLSIT</sequence>
<keyword id="KW-0067">ATP-binding</keyword>
<keyword id="KW-0436">Ligase</keyword>
<keyword id="KW-0460">Magnesium</keyword>
<keyword id="KW-0479">Metal-binding</keyword>
<keyword id="KW-0547">Nucleotide-binding</keyword>
<keyword id="KW-0658">Purine biosynthesis</keyword>
<name>PURT_BACVZ</name>
<accession>A7Z0Z2</accession>
<protein>
    <recommendedName>
        <fullName evidence="1">Formate-dependent phosphoribosylglycinamide formyltransferase</fullName>
        <ecNumber evidence="1">6.3.1.21</ecNumber>
    </recommendedName>
    <alternativeName>
        <fullName evidence="1">5'-phosphoribosylglycinamide transformylase 2</fullName>
    </alternativeName>
    <alternativeName>
        <fullName evidence="1">Formate-dependent GAR transformylase</fullName>
    </alternativeName>
    <alternativeName>
        <fullName evidence="1">GAR transformylase 2</fullName>
        <shortName evidence="1">GART 2</shortName>
    </alternativeName>
    <alternativeName>
        <fullName evidence="1">Non-folate glycinamide ribonucleotide transformylase</fullName>
    </alternativeName>
    <alternativeName>
        <fullName evidence="1">Phosphoribosylglycinamide formyltransferase 2</fullName>
    </alternativeName>
</protein>
<organism>
    <name type="scientific">Bacillus velezensis (strain DSM 23117 / BGSC 10A6 / LMG 26770 / FZB42)</name>
    <name type="common">Bacillus amyloliquefaciens subsp. plantarum</name>
    <dbReference type="NCBI Taxonomy" id="326423"/>
    <lineage>
        <taxon>Bacteria</taxon>
        <taxon>Bacillati</taxon>
        <taxon>Bacillota</taxon>
        <taxon>Bacilli</taxon>
        <taxon>Bacillales</taxon>
        <taxon>Bacillaceae</taxon>
        <taxon>Bacillus</taxon>
        <taxon>Bacillus amyloliquefaciens group</taxon>
    </lineage>
</organism>
<comment type="function">
    <text evidence="1">Involved in the de novo purine biosynthesis. Catalyzes the transfer of formate to 5-phospho-ribosyl-glycinamide (GAR), producing 5-phospho-ribosyl-N-formylglycinamide (FGAR). Formate is provided by PurU via hydrolysis of 10-formyl-tetrahydrofolate.</text>
</comment>
<comment type="catalytic activity">
    <reaction evidence="1">
        <text>N(1)-(5-phospho-beta-D-ribosyl)glycinamide + formate + ATP = N(2)-formyl-N(1)-(5-phospho-beta-D-ribosyl)glycinamide + ADP + phosphate + H(+)</text>
        <dbReference type="Rhea" id="RHEA:24829"/>
        <dbReference type="ChEBI" id="CHEBI:15378"/>
        <dbReference type="ChEBI" id="CHEBI:15740"/>
        <dbReference type="ChEBI" id="CHEBI:30616"/>
        <dbReference type="ChEBI" id="CHEBI:43474"/>
        <dbReference type="ChEBI" id="CHEBI:143788"/>
        <dbReference type="ChEBI" id="CHEBI:147286"/>
        <dbReference type="ChEBI" id="CHEBI:456216"/>
        <dbReference type="EC" id="6.3.1.21"/>
    </reaction>
    <physiologicalReaction direction="left-to-right" evidence="1">
        <dbReference type="Rhea" id="RHEA:24830"/>
    </physiologicalReaction>
</comment>
<comment type="pathway">
    <text evidence="1">Purine metabolism; IMP biosynthesis via de novo pathway; N(2)-formyl-N(1)-(5-phospho-D-ribosyl)glycinamide from N(1)-(5-phospho-D-ribosyl)glycinamide (formate route): step 1/1.</text>
</comment>
<comment type="subunit">
    <text evidence="1">Homodimer.</text>
</comment>
<comment type="similarity">
    <text evidence="1">Belongs to the PurK/PurT family.</text>
</comment>
<reference key="1">
    <citation type="journal article" date="2007" name="Nat. Biotechnol.">
        <title>Comparative analysis of the complete genome sequence of the plant growth-promoting bacterium Bacillus amyloliquefaciens FZB42.</title>
        <authorList>
            <person name="Chen X.H."/>
            <person name="Koumoutsi A."/>
            <person name="Scholz R."/>
            <person name="Eisenreich A."/>
            <person name="Schneider K."/>
            <person name="Heinemeyer I."/>
            <person name="Morgenstern B."/>
            <person name="Voss B."/>
            <person name="Hess W.R."/>
            <person name="Reva O."/>
            <person name="Junge H."/>
            <person name="Voigt B."/>
            <person name="Jungblut P.R."/>
            <person name="Vater J."/>
            <person name="Suessmuth R."/>
            <person name="Liesegang H."/>
            <person name="Strittmatter A."/>
            <person name="Gottschalk G."/>
            <person name="Borriss R."/>
        </authorList>
    </citation>
    <scope>NUCLEOTIDE SEQUENCE [LARGE SCALE GENOMIC DNA]</scope>
    <source>
        <strain>DSM 23117 / BGSC 10A6 / LMG 26770 / FZB42</strain>
    </source>
</reference>
<dbReference type="EC" id="6.3.1.21" evidence="1"/>
<dbReference type="EMBL" id="CP000560">
    <property type="protein sequence ID" value="ABS72668.1"/>
    <property type="molecule type" value="Genomic_DNA"/>
</dbReference>
<dbReference type="RefSeq" id="WP_011996252.1">
    <property type="nucleotide sequence ID" value="NC_009725.2"/>
</dbReference>
<dbReference type="SMR" id="A7Z0Z2"/>
<dbReference type="GeneID" id="93079407"/>
<dbReference type="KEGG" id="bay:RBAM_002690"/>
<dbReference type="HOGENOM" id="CLU_011534_1_3_9"/>
<dbReference type="UniPathway" id="UPA00074">
    <property type="reaction ID" value="UER00127"/>
</dbReference>
<dbReference type="Proteomes" id="UP000001120">
    <property type="component" value="Chromosome"/>
</dbReference>
<dbReference type="GO" id="GO:0005829">
    <property type="term" value="C:cytosol"/>
    <property type="evidence" value="ECO:0007669"/>
    <property type="project" value="TreeGrafter"/>
</dbReference>
<dbReference type="GO" id="GO:0005524">
    <property type="term" value="F:ATP binding"/>
    <property type="evidence" value="ECO:0007669"/>
    <property type="project" value="UniProtKB-UniRule"/>
</dbReference>
<dbReference type="GO" id="GO:0000287">
    <property type="term" value="F:magnesium ion binding"/>
    <property type="evidence" value="ECO:0007669"/>
    <property type="project" value="InterPro"/>
</dbReference>
<dbReference type="GO" id="GO:0043815">
    <property type="term" value="F:phosphoribosylglycinamide formyltransferase 2 activity"/>
    <property type="evidence" value="ECO:0007669"/>
    <property type="project" value="UniProtKB-UniRule"/>
</dbReference>
<dbReference type="GO" id="GO:0004644">
    <property type="term" value="F:phosphoribosylglycinamide formyltransferase activity"/>
    <property type="evidence" value="ECO:0007669"/>
    <property type="project" value="InterPro"/>
</dbReference>
<dbReference type="GO" id="GO:0006189">
    <property type="term" value="P:'de novo' IMP biosynthetic process"/>
    <property type="evidence" value="ECO:0007669"/>
    <property type="project" value="UniProtKB-UniRule"/>
</dbReference>
<dbReference type="FunFam" id="3.30.1490.20:FF:000013">
    <property type="entry name" value="Formate-dependent phosphoribosylglycinamide formyltransferase"/>
    <property type="match status" value="1"/>
</dbReference>
<dbReference type="Gene3D" id="3.40.50.20">
    <property type="match status" value="1"/>
</dbReference>
<dbReference type="Gene3D" id="3.30.1490.20">
    <property type="entry name" value="ATP-grasp fold, A domain"/>
    <property type="match status" value="1"/>
</dbReference>
<dbReference type="Gene3D" id="3.30.470.20">
    <property type="entry name" value="ATP-grasp fold, B domain"/>
    <property type="match status" value="1"/>
</dbReference>
<dbReference type="HAMAP" id="MF_01643">
    <property type="entry name" value="PurT"/>
    <property type="match status" value="1"/>
</dbReference>
<dbReference type="InterPro" id="IPR011761">
    <property type="entry name" value="ATP-grasp"/>
</dbReference>
<dbReference type="InterPro" id="IPR003135">
    <property type="entry name" value="ATP-grasp_carboxylate-amine"/>
</dbReference>
<dbReference type="InterPro" id="IPR013815">
    <property type="entry name" value="ATP_grasp_subdomain_1"/>
</dbReference>
<dbReference type="InterPro" id="IPR016185">
    <property type="entry name" value="PreATP-grasp_dom_sf"/>
</dbReference>
<dbReference type="InterPro" id="IPR005862">
    <property type="entry name" value="PurT"/>
</dbReference>
<dbReference type="InterPro" id="IPR054350">
    <property type="entry name" value="PurT/PurK_preATP-grasp"/>
</dbReference>
<dbReference type="InterPro" id="IPR048740">
    <property type="entry name" value="PurT_C"/>
</dbReference>
<dbReference type="InterPro" id="IPR011054">
    <property type="entry name" value="Rudment_hybrid_motif"/>
</dbReference>
<dbReference type="NCBIfam" id="NF006766">
    <property type="entry name" value="PRK09288.1"/>
    <property type="match status" value="1"/>
</dbReference>
<dbReference type="NCBIfam" id="TIGR01142">
    <property type="entry name" value="purT"/>
    <property type="match status" value="1"/>
</dbReference>
<dbReference type="PANTHER" id="PTHR43055">
    <property type="entry name" value="FORMATE-DEPENDENT PHOSPHORIBOSYLGLYCINAMIDE FORMYLTRANSFERASE"/>
    <property type="match status" value="1"/>
</dbReference>
<dbReference type="PANTHER" id="PTHR43055:SF1">
    <property type="entry name" value="FORMATE-DEPENDENT PHOSPHORIBOSYLGLYCINAMIDE FORMYLTRANSFERASE"/>
    <property type="match status" value="1"/>
</dbReference>
<dbReference type="Pfam" id="PF02222">
    <property type="entry name" value="ATP-grasp"/>
    <property type="match status" value="1"/>
</dbReference>
<dbReference type="Pfam" id="PF21244">
    <property type="entry name" value="PurT_C"/>
    <property type="match status" value="1"/>
</dbReference>
<dbReference type="Pfam" id="PF22660">
    <property type="entry name" value="RS_preATP-grasp-like"/>
    <property type="match status" value="1"/>
</dbReference>
<dbReference type="SUPFAM" id="SSF56059">
    <property type="entry name" value="Glutathione synthetase ATP-binding domain-like"/>
    <property type="match status" value="1"/>
</dbReference>
<dbReference type="SUPFAM" id="SSF52440">
    <property type="entry name" value="PreATP-grasp domain"/>
    <property type="match status" value="1"/>
</dbReference>
<dbReference type="SUPFAM" id="SSF51246">
    <property type="entry name" value="Rudiment single hybrid motif"/>
    <property type="match status" value="1"/>
</dbReference>
<dbReference type="PROSITE" id="PS50975">
    <property type="entry name" value="ATP_GRASP"/>
    <property type="match status" value="1"/>
</dbReference>
<gene>
    <name evidence="1" type="primary">purT</name>
    <name type="ordered locus">RBAM_002690</name>
</gene>
<evidence type="ECO:0000255" key="1">
    <source>
        <dbReference type="HAMAP-Rule" id="MF_01643"/>
    </source>
</evidence>